<proteinExistence type="inferred from homology"/>
<protein>
    <recommendedName>
        <fullName evidence="1">Cytidylate kinase</fullName>
        <shortName evidence="1">CK</shortName>
        <ecNumber evidence="1">2.7.4.25</ecNumber>
    </recommendedName>
    <alternativeName>
        <fullName evidence="1">Cytidine monophosphate kinase</fullName>
        <shortName evidence="1">CMP kinase</shortName>
    </alternativeName>
</protein>
<accession>Q2YY79</accession>
<gene>
    <name evidence="1" type="primary">cmk</name>
    <name type="ordered locus">SAB1340c</name>
</gene>
<reference key="1">
    <citation type="journal article" date="2007" name="PLoS ONE">
        <title>Molecular correlates of host specialization in Staphylococcus aureus.</title>
        <authorList>
            <person name="Herron-Olson L."/>
            <person name="Fitzgerald J.R."/>
            <person name="Musser J.M."/>
            <person name="Kapur V."/>
        </authorList>
    </citation>
    <scope>NUCLEOTIDE SEQUENCE [LARGE SCALE GENOMIC DNA]</scope>
    <source>
        <strain>bovine RF122 / ET3-1</strain>
    </source>
</reference>
<comment type="catalytic activity">
    <reaction evidence="1">
        <text>CMP + ATP = CDP + ADP</text>
        <dbReference type="Rhea" id="RHEA:11600"/>
        <dbReference type="ChEBI" id="CHEBI:30616"/>
        <dbReference type="ChEBI" id="CHEBI:58069"/>
        <dbReference type="ChEBI" id="CHEBI:60377"/>
        <dbReference type="ChEBI" id="CHEBI:456216"/>
        <dbReference type="EC" id="2.7.4.25"/>
    </reaction>
</comment>
<comment type="catalytic activity">
    <reaction evidence="1">
        <text>dCMP + ATP = dCDP + ADP</text>
        <dbReference type="Rhea" id="RHEA:25094"/>
        <dbReference type="ChEBI" id="CHEBI:30616"/>
        <dbReference type="ChEBI" id="CHEBI:57566"/>
        <dbReference type="ChEBI" id="CHEBI:58593"/>
        <dbReference type="ChEBI" id="CHEBI:456216"/>
        <dbReference type="EC" id="2.7.4.25"/>
    </reaction>
</comment>
<comment type="subcellular location">
    <subcellularLocation>
        <location evidence="1">Cytoplasm</location>
    </subcellularLocation>
</comment>
<comment type="similarity">
    <text evidence="1">Belongs to the cytidylate kinase family. Type 1 subfamily.</text>
</comment>
<evidence type="ECO:0000255" key="1">
    <source>
        <dbReference type="HAMAP-Rule" id="MF_00238"/>
    </source>
</evidence>
<dbReference type="EC" id="2.7.4.25" evidence="1"/>
<dbReference type="EMBL" id="AJ938182">
    <property type="protein sequence ID" value="CAI81029.1"/>
    <property type="molecule type" value="Genomic_DNA"/>
</dbReference>
<dbReference type="RefSeq" id="WP_000644386.1">
    <property type="nucleotide sequence ID" value="NC_007622.1"/>
</dbReference>
<dbReference type="SMR" id="Q2YY79"/>
<dbReference type="KEGG" id="sab:SAB1340c"/>
<dbReference type="HOGENOM" id="CLU_079959_0_2_9"/>
<dbReference type="GO" id="GO:0005829">
    <property type="term" value="C:cytosol"/>
    <property type="evidence" value="ECO:0007669"/>
    <property type="project" value="TreeGrafter"/>
</dbReference>
<dbReference type="GO" id="GO:0005524">
    <property type="term" value="F:ATP binding"/>
    <property type="evidence" value="ECO:0007669"/>
    <property type="project" value="UniProtKB-UniRule"/>
</dbReference>
<dbReference type="GO" id="GO:0036430">
    <property type="term" value="F:CMP kinase activity"/>
    <property type="evidence" value="ECO:0007669"/>
    <property type="project" value="RHEA"/>
</dbReference>
<dbReference type="GO" id="GO:0036431">
    <property type="term" value="F:dCMP kinase activity"/>
    <property type="evidence" value="ECO:0007669"/>
    <property type="project" value="RHEA"/>
</dbReference>
<dbReference type="GO" id="GO:0015949">
    <property type="term" value="P:nucleobase-containing small molecule interconversion"/>
    <property type="evidence" value="ECO:0007669"/>
    <property type="project" value="TreeGrafter"/>
</dbReference>
<dbReference type="GO" id="GO:0006220">
    <property type="term" value="P:pyrimidine nucleotide metabolic process"/>
    <property type="evidence" value="ECO:0007669"/>
    <property type="project" value="UniProtKB-UniRule"/>
</dbReference>
<dbReference type="CDD" id="cd02020">
    <property type="entry name" value="CMPK"/>
    <property type="match status" value="1"/>
</dbReference>
<dbReference type="Gene3D" id="3.40.50.300">
    <property type="entry name" value="P-loop containing nucleotide triphosphate hydrolases"/>
    <property type="match status" value="1"/>
</dbReference>
<dbReference type="HAMAP" id="MF_00238">
    <property type="entry name" value="Cytidyl_kinase_type1"/>
    <property type="match status" value="1"/>
</dbReference>
<dbReference type="InterPro" id="IPR003136">
    <property type="entry name" value="Cytidylate_kin"/>
</dbReference>
<dbReference type="InterPro" id="IPR011994">
    <property type="entry name" value="Cytidylate_kinase_dom"/>
</dbReference>
<dbReference type="InterPro" id="IPR027417">
    <property type="entry name" value="P-loop_NTPase"/>
</dbReference>
<dbReference type="NCBIfam" id="TIGR00017">
    <property type="entry name" value="cmk"/>
    <property type="match status" value="1"/>
</dbReference>
<dbReference type="PANTHER" id="PTHR21299:SF2">
    <property type="entry name" value="CYTIDYLATE KINASE"/>
    <property type="match status" value="1"/>
</dbReference>
<dbReference type="PANTHER" id="PTHR21299">
    <property type="entry name" value="CYTIDYLATE KINASE/PANTOATE-BETA-ALANINE LIGASE"/>
    <property type="match status" value="1"/>
</dbReference>
<dbReference type="Pfam" id="PF02224">
    <property type="entry name" value="Cytidylate_kin"/>
    <property type="match status" value="1"/>
</dbReference>
<dbReference type="SUPFAM" id="SSF52540">
    <property type="entry name" value="P-loop containing nucleoside triphosphate hydrolases"/>
    <property type="match status" value="1"/>
</dbReference>
<name>KCY_STAAB</name>
<keyword id="KW-0067">ATP-binding</keyword>
<keyword id="KW-0963">Cytoplasm</keyword>
<keyword id="KW-0418">Kinase</keyword>
<keyword id="KW-0547">Nucleotide-binding</keyword>
<keyword id="KW-0808">Transferase</keyword>
<sequence length="219" mass="24635">MKAINIALDGPAAAGKSTIAKRVASELSMIYVDTGAMYRALTYKYLKLNKTEDFAKLVDQTTLDLTYKADKGQCVILDNEDVTDFLRNNDVTQHVSYVASKEPVRLFAVKKQKELAAEKGIVMDGRDIGTVVLPDADLKVYMIASVEERAERRYKDNQLRGIESNFEDLKRDIEARDQYDMNREISPLRKADDAVTLDTTGKTIEEVTDEILAMVSQIK</sequence>
<organism>
    <name type="scientific">Staphylococcus aureus (strain bovine RF122 / ET3-1)</name>
    <dbReference type="NCBI Taxonomy" id="273036"/>
    <lineage>
        <taxon>Bacteria</taxon>
        <taxon>Bacillati</taxon>
        <taxon>Bacillota</taxon>
        <taxon>Bacilli</taxon>
        <taxon>Bacillales</taxon>
        <taxon>Staphylococcaceae</taxon>
        <taxon>Staphylococcus</taxon>
    </lineage>
</organism>
<feature type="chain" id="PRO_1000048290" description="Cytidylate kinase">
    <location>
        <begin position="1"/>
        <end position="219"/>
    </location>
</feature>
<feature type="binding site" evidence="1">
    <location>
        <begin position="10"/>
        <end position="18"/>
    </location>
    <ligand>
        <name>ATP</name>
        <dbReference type="ChEBI" id="CHEBI:30616"/>
    </ligand>
</feature>